<gene>
    <name evidence="1" type="primary">adk</name>
    <name type="ordered locus">Oant_1977</name>
</gene>
<organism>
    <name type="scientific">Brucella anthropi (strain ATCC 49188 / DSM 6882 / CCUG 24695 / JCM 21032 / LMG 3331 / NBRC 15819 / NCTC 12168 / Alc 37)</name>
    <name type="common">Ochrobactrum anthropi</name>
    <dbReference type="NCBI Taxonomy" id="439375"/>
    <lineage>
        <taxon>Bacteria</taxon>
        <taxon>Pseudomonadati</taxon>
        <taxon>Pseudomonadota</taxon>
        <taxon>Alphaproteobacteria</taxon>
        <taxon>Hyphomicrobiales</taxon>
        <taxon>Brucellaceae</taxon>
        <taxon>Brucella/Ochrobactrum group</taxon>
        <taxon>Brucella</taxon>
    </lineage>
</organism>
<protein>
    <recommendedName>
        <fullName evidence="1">Adenylate kinase</fullName>
        <shortName evidence="1">AK</shortName>
        <ecNumber evidence="1">2.7.4.3</ecNumber>
    </recommendedName>
    <alternativeName>
        <fullName evidence="1">ATP-AMP transphosphorylase</fullName>
    </alternativeName>
    <alternativeName>
        <fullName evidence="1">ATP:AMP phosphotransferase</fullName>
    </alternativeName>
    <alternativeName>
        <fullName evidence="1">Adenylate monophosphate kinase</fullName>
    </alternativeName>
</protein>
<evidence type="ECO:0000255" key="1">
    <source>
        <dbReference type="HAMAP-Rule" id="MF_00235"/>
    </source>
</evidence>
<feature type="chain" id="PRO_1000058868" description="Adenylate kinase">
    <location>
        <begin position="1"/>
        <end position="194"/>
    </location>
</feature>
<feature type="region of interest" description="NMP" evidence="1">
    <location>
        <begin position="30"/>
        <end position="59"/>
    </location>
</feature>
<feature type="region of interest" description="LID" evidence="1">
    <location>
        <begin position="126"/>
        <end position="142"/>
    </location>
</feature>
<feature type="binding site" evidence="1">
    <location>
        <begin position="10"/>
        <end position="15"/>
    </location>
    <ligand>
        <name>ATP</name>
        <dbReference type="ChEBI" id="CHEBI:30616"/>
    </ligand>
</feature>
<feature type="binding site" evidence="1">
    <location>
        <position position="31"/>
    </location>
    <ligand>
        <name>AMP</name>
        <dbReference type="ChEBI" id="CHEBI:456215"/>
    </ligand>
</feature>
<feature type="binding site" evidence="1">
    <location>
        <position position="36"/>
    </location>
    <ligand>
        <name>AMP</name>
        <dbReference type="ChEBI" id="CHEBI:456215"/>
    </ligand>
</feature>
<feature type="binding site" evidence="1">
    <location>
        <begin position="57"/>
        <end position="59"/>
    </location>
    <ligand>
        <name>AMP</name>
        <dbReference type="ChEBI" id="CHEBI:456215"/>
    </ligand>
</feature>
<feature type="binding site" evidence="1">
    <location>
        <begin position="85"/>
        <end position="88"/>
    </location>
    <ligand>
        <name>AMP</name>
        <dbReference type="ChEBI" id="CHEBI:456215"/>
    </ligand>
</feature>
<feature type="binding site" evidence="1">
    <location>
        <position position="92"/>
    </location>
    <ligand>
        <name>AMP</name>
        <dbReference type="ChEBI" id="CHEBI:456215"/>
    </ligand>
</feature>
<feature type="binding site" evidence="1">
    <location>
        <position position="127"/>
    </location>
    <ligand>
        <name>ATP</name>
        <dbReference type="ChEBI" id="CHEBI:30616"/>
    </ligand>
</feature>
<feature type="binding site" evidence="1">
    <location>
        <position position="139"/>
    </location>
    <ligand>
        <name>AMP</name>
        <dbReference type="ChEBI" id="CHEBI:456215"/>
    </ligand>
</feature>
<feature type="binding site" evidence="1">
    <location>
        <position position="150"/>
    </location>
    <ligand>
        <name>AMP</name>
        <dbReference type="ChEBI" id="CHEBI:456215"/>
    </ligand>
</feature>
<feature type="binding site" evidence="1">
    <location>
        <position position="178"/>
    </location>
    <ligand>
        <name>ATP</name>
        <dbReference type="ChEBI" id="CHEBI:30616"/>
    </ligand>
</feature>
<accession>A6X0D9</accession>
<reference key="1">
    <citation type="journal article" date="2011" name="J. Bacteriol.">
        <title>Genome of Ochrobactrum anthropi ATCC 49188 T, a versatile opportunistic pathogen and symbiont of several eukaryotic hosts.</title>
        <authorList>
            <person name="Chain P.S."/>
            <person name="Lang D.M."/>
            <person name="Comerci D.J."/>
            <person name="Malfatti S.A."/>
            <person name="Vergez L.M."/>
            <person name="Shin M."/>
            <person name="Ugalde R.A."/>
            <person name="Garcia E."/>
            <person name="Tolmasky M.E."/>
        </authorList>
    </citation>
    <scope>NUCLEOTIDE SEQUENCE [LARGE SCALE GENOMIC DNA]</scope>
    <source>
        <strain>ATCC 49188 / DSM 6882 / CCUG 24695 / JCM 21032 / LMG 3331 / NBRC 15819 / NCTC 12168 / Alc 37</strain>
    </source>
</reference>
<comment type="function">
    <text evidence="1">Catalyzes the reversible transfer of the terminal phosphate group between ATP and AMP. Plays an important role in cellular energy homeostasis and in adenine nucleotide metabolism.</text>
</comment>
<comment type="catalytic activity">
    <reaction evidence="1">
        <text>AMP + ATP = 2 ADP</text>
        <dbReference type="Rhea" id="RHEA:12973"/>
        <dbReference type="ChEBI" id="CHEBI:30616"/>
        <dbReference type="ChEBI" id="CHEBI:456215"/>
        <dbReference type="ChEBI" id="CHEBI:456216"/>
        <dbReference type="EC" id="2.7.4.3"/>
    </reaction>
</comment>
<comment type="pathway">
    <text evidence="1">Purine metabolism; AMP biosynthesis via salvage pathway; AMP from ADP: step 1/1.</text>
</comment>
<comment type="subunit">
    <text evidence="1">Monomer.</text>
</comment>
<comment type="subcellular location">
    <subcellularLocation>
        <location evidence="1">Cytoplasm</location>
    </subcellularLocation>
</comment>
<comment type="domain">
    <text evidence="1">Consists of three domains, a large central CORE domain and two small peripheral domains, NMPbind and LID, which undergo movements during catalysis. The LID domain closes over the site of phosphoryl transfer upon ATP binding. Assembling and dissambling the active center during each catalytic cycle provides an effective means to prevent ATP hydrolysis.</text>
</comment>
<comment type="similarity">
    <text evidence="1">Belongs to the adenylate kinase family.</text>
</comment>
<proteinExistence type="inferred from homology"/>
<keyword id="KW-0067">ATP-binding</keyword>
<keyword id="KW-0963">Cytoplasm</keyword>
<keyword id="KW-0418">Kinase</keyword>
<keyword id="KW-0545">Nucleotide biosynthesis</keyword>
<keyword id="KW-0547">Nucleotide-binding</keyword>
<keyword id="KW-1185">Reference proteome</keyword>
<keyword id="KW-0808">Transferase</keyword>
<name>KAD_BRUA4</name>
<dbReference type="EC" id="2.7.4.3" evidence="1"/>
<dbReference type="EMBL" id="CP000758">
    <property type="protein sequence ID" value="ABS14693.1"/>
    <property type="molecule type" value="Genomic_DNA"/>
</dbReference>
<dbReference type="RefSeq" id="WP_010659927.1">
    <property type="nucleotide sequence ID" value="NC_009667.1"/>
</dbReference>
<dbReference type="SMR" id="A6X0D9"/>
<dbReference type="STRING" id="439375.Oant_1977"/>
<dbReference type="KEGG" id="oan:Oant_1977"/>
<dbReference type="eggNOG" id="COG0563">
    <property type="taxonomic scope" value="Bacteria"/>
</dbReference>
<dbReference type="HOGENOM" id="CLU_032354_4_1_5"/>
<dbReference type="PhylomeDB" id="A6X0D9"/>
<dbReference type="UniPathway" id="UPA00588">
    <property type="reaction ID" value="UER00649"/>
</dbReference>
<dbReference type="Proteomes" id="UP000002301">
    <property type="component" value="Chromosome 1"/>
</dbReference>
<dbReference type="GO" id="GO:0005737">
    <property type="term" value="C:cytoplasm"/>
    <property type="evidence" value="ECO:0007669"/>
    <property type="project" value="UniProtKB-SubCell"/>
</dbReference>
<dbReference type="GO" id="GO:0004017">
    <property type="term" value="F:adenylate kinase activity"/>
    <property type="evidence" value="ECO:0007669"/>
    <property type="project" value="UniProtKB-UniRule"/>
</dbReference>
<dbReference type="GO" id="GO:0005524">
    <property type="term" value="F:ATP binding"/>
    <property type="evidence" value="ECO:0007669"/>
    <property type="project" value="UniProtKB-UniRule"/>
</dbReference>
<dbReference type="GO" id="GO:0044209">
    <property type="term" value="P:AMP salvage"/>
    <property type="evidence" value="ECO:0007669"/>
    <property type="project" value="UniProtKB-UniRule"/>
</dbReference>
<dbReference type="CDD" id="cd01428">
    <property type="entry name" value="ADK"/>
    <property type="match status" value="1"/>
</dbReference>
<dbReference type="Gene3D" id="3.40.50.300">
    <property type="entry name" value="P-loop containing nucleotide triphosphate hydrolases"/>
    <property type="match status" value="1"/>
</dbReference>
<dbReference type="HAMAP" id="MF_00235">
    <property type="entry name" value="Adenylate_kinase_Adk"/>
    <property type="match status" value="1"/>
</dbReference>
<dbReference type="InterPro" id="IPR006259">
    <property type="entry name" value="Adenyl_kin_sub"/>
</dbReference>
<dbReference type="InterPro" id="IPR000850">
    <property type="entry name" value="Adenylat/UMP-CMP_kin"/>
</dbReference>
<dbReference type="InterPro" id="IPR033690">
    <property type="entry name" value="Adenylat_kinase_CS"/>
</dbReference>
<dbReference type="InterPro" id="IPR027417">
    <property type="entry name" value="P-loop_NTPase"/>
</dbReference>
<dbReference type="NCBIfam" id="TIGR01351">
    <property type="entry name" value="adk"/>
    <property type="match status" value="1"/>
</dbReference>
<dbReference type="NCBIfam" id="NF001381">
    <property type="entry name" value="PRK00279.1-3"/>
    <property type="match status" value="1"/>
</dbReference>
<dbReference type="NCBIfam" id="NF011100">
    <property type="entry name" value="PRK14527.1"/>
    <property type="match status" value="1"/>
</dbReference>
<dbReference type="NCBIfam" id="NF011101">
    <property type="entry name" value="PRK14528.1"/>
    <property type="match status" value="1"/>
</dbReference>
<dbReference type="NCBIfam" id="NF011104">
    <property type="entry name" value="PRK14531.1"/>
    <property type="match status" value="1"/>
</dbReference>
<dbReference type="NCBIfam" id="NF011105">
    <property type="entry name" value="PRK14532.1"/>
    <property type="match status" value="1"/>
</dbReference>
<dbReference type="PANTHER" id="PTHR23359">
    <property type="entry name" value="NUCLEOTIDE KINASE"/>
    <property type="match status" value="1"/>
</dbReference>
<dbReference type="Pfam" id="PF00406">
    <property type="entry name" value="ADK"/>
    <property type="match status" value="1"/>
</dbReference>
<dbReference type="PRINTS" id="PR00094">
    <property type="entry name" value="ADENYLTKNASE"/>
</dbReference>
<dbReference type="SUPFAM" id="SSF52540">
    <property type="entry name" value="P-loop containing nucleoside triphosphate hydrolases"/>
    <property type="match status" value="1"/>
</dbReference>
<dbReference type="PROSITE" id="PS00113">
    <property type="entry name" value="ADENYLATE_KINASE"/>
    <property type="match status" value="1"/>
</dbReference>
<sequence length="194" mass="20779">MRLILLGPPGAGKGTQAGLLTKKHGIPQLSTGDMLRAAVAQQSEIGKRAKAVMDAGQLVSDEIVNQIVSERIDAPDCANGFILDGYPRTVPQAQALGTMLAGKGLKLDAVIELKVDENALVKRMESRVAETIAKGGQVRSDDNPEAFRKRLVEYREKTSPLSSYYAGTGELRVINGMAPVEEVTAEIERILVPA</sequence>